<dbReference type="EMBL" id="AC073585">
    <property type="status" value="NOT_ANNOTATED_CDS"/>
    <property type="molecule type" value="Genomic_DNA"/>
</dbReference>
<dbReference type="CCDS" id="CCDS31304.1"/>
<dbReference type="RefSeq" id="NP_001025059.1">
    <property type="nucleotide sequence ID" value="NM_001029888.3"/>
</dbReference>
<dbReference type="RefSeq" id="XP_016871127.1">
    <property type="nucleotide sequence ID" value="XM_017015638.2"/>
</dbReference>
<dbReference type="RefSeq" id="XP_016871128.1">
    <property type="nucleotide sequence ID" value="XM_017015639.2"/>
</dbReference>
<dbReference type="RefSeq" id="XP_054220685.1">
    <property type="nucleotide sequence ID" value="XM_054364710.1"/>
</dbReference>
<dbReference type="RefSeq" id="XP_054220686.1">
    <property type="nucleotide sequence ID" value="XM_054364711.1"/>
</dbReference>
<dbReference type="SMR" id="A6NFZ4"/>
<dbReference type="BioGRID" id="125617">
    <property type="interactions" value="1"/>
</dbReference>
<dbReference type="STRING" id="9606.ENSP00000357889"/>
<dbReference type="iPTMnet" id="A6NFZ4"/>
<dbReference type="PhosphoSitePlus" id="A6NFZ4"/>
<dbReference type="BioMuta" id="FAM24A"/>
<dbReference type="MassIVE" id="A6NFZ4"/>
<dbReference type="PaxDb" id="9606-ENSP00000357889"/>
<dbReference type="PeptideAtlas" id="A6NFZ4"/>
<dbReference type="ProteomicsDB" id="1091"/>
<dbReference type="DNASU" id="118670"/>
<dbReference type="Ensembl" id="ENST00000368894.2">
    <property type="protein sequence ID" value="ENSP00000357889.1"/>
    <property type="gene ID" value="ENSG00000203795.3"/>
</dbReference>
<dbReference type="GeneID" id="118670"/>
<dbReference type="KEGG" id="hsa:118670"/>
<dbReference type="MANE-Select" id="ENST00000368894.2">
    <property type="protein sequence ID" value="ENSP00000357889.1"/>
    <property type="RefSeq nucleotide sequence ID" value="NM_001029888.3"/>
    <property type="RefSeq protein sequence ID" value="NP_001025059.1"/>
</dbReference>
<dbReference type="UCSC" id="uc001lgv.3">
    <property type="organism name" value="human"/>
</dbReference>
<dbReference type="AGR" id="HGNC:23470"/>
<dbReference type="CTD" id="118670"/>
<dbReference type="GeneCards" id="FAM24A"/>
<dbReference type="HGNC" id="HGNC:23470">
    <property type="gene designation" value="FAM24A"/>
</dbReference>
<dbReference type="HPA" id="ENSG00000203795">
    <property type="expression patterns" value="Tissue enriched (testis)"/>
</dbReference>
<dbReference type="neXtProt" id="NX_A6NFZ4"/>
<dbReference type="OpenTargets" id="ENSG00000203795"/>
<dbReference type="PharmGKB" id="PA134930660"/>
<dbReference type="VEuPathDB" id="HostDB:ENSG00000203795"/>
<dbReference type="eggNOG" id="ENOG502TEP5">
    <property type="taxonomic scope" value="Eukaryota"/>
</dbReference>
<dbReference type="GeneTree" id="ENSGT00940000163005"/>
<dbReference type="HOGENOM" id="CLU_160106_0_0_1"/>
<dbReference type="InParanoid" id="A6NFZ4"/>
<dbReference type="OMA" id="CLYFKIA"/>
<dbReference type="OrthoDB" id="9784605at2759"/>
<dbReference type="PAN-GO" id="A6NFZ4">
    <property type="GO annotations" value="0 GO annotations based on evolutionary models"/>
</dbReference>
<dbReference type="PhylomeDB" id="A6NFZ4"/>
<dbReference type="TreeFam" id="TF338384"/>
<dbReference type="SignaLink" id="A6NFZ4"/>
<dbReference type="BioGRID-ORCS" id="118670">
    <property type="hits" value="4 hits in 1133 CRISPR screens"/>
</dbReference>
<dbReference type="GenomeRNAi" id="118670"/>
<dbReference type="Pharos" id="A6NFZ4">
    <property type="development level" value="Tdark"/>
</dbReference>
<dbReference type="PRO" id="PR:A6NFZ4"/>
<dbReference type="Proteomes" id="UP000005640">
    <property type="component" value="Chromosome 10"/>
</dbReference>
<dbReference type="RNAct" id="A6NFZ4">
    <property type="molecule type" value="protein"/>
</dbReference>
<dbReference type="Bgee" id="ENSG00000203795">
    <property type="expression patterns" value="Expressed in sperm and 25 other cell types or tissues"/>
</dbReference>
<dbReference type="GO" id="GO:0005576">
    <property type="term" value="C:extracellular region"/>
    <property type="evidence" value="ECO:0007669"/>
    <property type="project" value="UniProtKB-SubCell"/>
</dbReference>
<dbReference type="InterPro" id="IPR028122">
    <property type="entry name" value="FAM24"/>
</dbReference>
<dbReference type="PANTHER" id="PTHR35860:SF1">
    <property type="entry name" value="PROTEIN FAM24A"/>
    <property type="match status" value="1"/>
</dbReference>
<dbReference type="PANTHER" id="PTHR35860">
    <property type="entry name" value="PROTEIN FAM24B"/>
    <property type="match status" value="1"/>
</dbReference>
<dbReference type="Pfam" id="PF15193">
    <property type="entry name" value="FAM24"/>
    <property type="match status" value="1"/>
</dbReference>
<comment type="subcellular location">
    <subcellularLocation>
        <location evidence="2">Secreted</location>
    </subcellularLocation>
</comment>
<comment type="similarity">
    <text evidence="2">Belongs to the FAM24 family.</text>
</comment>
<evidence type="ECO:0000255" key="1"/>
<evidence type="ECO:0000305" key="2"/>
<keyword id="KW-1267">Proteomics identification</keyword>
<keyword id="KW-1185">Reference proteome</keyword>
<keyword id="KW-0964">Secreted</keyword>
<keyword id="KW-0732">Signal</keyword>
<name>FA24A_HUMAN</name>
<sequence>MAKMFDLRTKIMIGIGSSLLVAAMVLLSVVFCLYFKVAKALKAAKDPDAVAVKNHNPDKVCWATNSQAKATTMESCPSLQCCEGCRMHASSDSLPPCCCDINEGL</sequence>
<protein>
    <recommendedName>
        <fullName>Protein FAM24A</fullName>
    </recommendedName>
</protein>
<gene>
    <name type="primary">FAM24A</name>
</gene>
<feature type="signal peptide" evidence="1">
    <location>
        <begin position="1"/>
        <end position="32"/>
    </location>
</feature>
<feature type="chain" id="PRO_0000317244" description="Protein FAM24A">
    <location>
        <begin position="33"/>
        <end position="105"/>
    </location>
</feature>
<reference key="1">
    <citation type="journal article" date="2004" name="Nature">
        <title>The DNA sequence and comparative analysis of human chromosome 10.</title>
        <authorList>
            <person name="Deloukas P."/>
            <person name="Earthrowl M.E."/>
            <person name="Grafham D.V."/>
            <person name="Rubenfield M."/>
            <person name="French L."/>
            <person name="Steward C.A."/>
            <person name="Sims S.K."/>
            <person name="Jones M.C."/>
            <person name="Searle S."/>
            <person name="Scott C."/>
            <person name="Howe K."/>
            <person name="Hunt S.E."/>
            <person name="Andrews T.D."/>
            <person name="Gilbert J.G.R."/>
            <person name="Swarbreck D."/>
            <person name="Ashurst J.L."/>
            <person name="Taylor A."/>
            <person name="Battles J."/>
            <person name="Bird C.P."/>
            <person name="Ainscough R."/>
            <person name="Almeida J.P."/>
            <person name="Ashwell R.I.S."/>
            <person name="Ambrose K.D."/>
            <person name="Babbage A.K."/>
            <person name="Bagguley C.L."/>
            <person name="Bailey J."/>
            <person name="Banerjee R."/>
            <person name="Bates K."/>
            <person name="Beasley H."/>
            <person name="Bray-Allen S."/>
            <person name="Brown A.J."/>
            <person name="Brown J.Y."/>
            <person name="Burford D.C."/>
            <person name="Burrill W."/>
            <person name="Burton J."/>
            <person name="Cahill P."/>
            <person name="Camire D."/>
            <person name="Carter N.P."/>
            <person name="Chapman J.C."/>
            <person name="Clark S.Y."/>
            <person name="Clarke G."/>
            <person name="Clee C.M."/>
            <person name="Clegg S."/>
            <person name="Corby N."/>
            <person name="Coulson A."/>
            <person name="Dhami P."/>
            <person name="Dutta I."/>
            <person name="Dunn M."/>
            <person name="Faulkner L."/>
            <person name="Frankish A."/>
            <person name="Frankland J.A."/>
            <person name="Garner P."/>
            <person name="Garnett J."/>
            <person name="Gribble S."/>
            <person name="Griffiths C."/>
            <person name="Grocock R."/>
            <person name="Gustafson E."/>
            <person name="Hammond S."/>
            <person name="Harley J.L."/>
            <person name="Hart E."/>
            <person name="Heath P.D."/>
            <person name="Ho T.P."/>
            <person name="Hopkins B."/>
            <person name="Horne J."/>
            <person name="Howden P.J."/>
            <person name="Huckle E."/>
            <person name="Hynds C."/>
            <person name="Johnson C."/>
            <person name="Johnson D."/>
            <person name="Kana A."/>
            <person name="Kay M."/>
            <person name="Kimberley A.M."/>
            <person name="Kershaw J.K."/>
            <person name="Kokkinaki M."/>
            <person name="Laird G.K."/>
            <person name="Lawlor S."/>
            <person name="Lee H.M."/>
            <person name="Leongamornlert D.A."/>
            <person name="Laird G."/>
            <person name="Lloyd C."/>
            <person name="Lloyd D.M."/>
            <person name="Loveland J."/>
            <person name="Lovell J."/>
            <person name="McLaren S."/>
            <person name="McLay K.E."/>
            <person name="McMurray A."/>
            <person name="Mashreghi-Mohammadi M."/>
            <person name="Matthews L."/>
            <person name="Milne S."/>
            <person name="Nickerson T."/>
            <person name="Nguyen M."/>
            <person name="Overton-Larty E."/>
            <person name="Palmer S.A."/>
            <person name="Pearce A.V."/>
            <person name="Peck A.I."/>
            <person name="Pelan S."/>
            <person name="Phillimore B."/>
            <person name="Porter K."/>
            <person name="Rice C.M."/>
            <person name="Rogosin A."/>
            <person name="Ross M.T."/>
            <person name="Sarafidou T."/>
            <person name="Sehra H.K."/>
            <person name="Shownkeen R."/>
            <person name="Skuce C.D."/>
            <person name="Smith M."/>
            <person name="Standring L."/>
            <person name="Sycamore N."/>
            <person name="Tester J."/>
            <person name="Thorpe A."/>
            <person name="Torcasso W."/>
            <person name="Tracey A."/>
            <person name="Tromans A."/>
            <person name="Tsolas J."/>
            <person name="Wall M."/>
            <person name="Walsh J."/>
            <person name="Wang H."/>
            <person name="Weinstock K."/>
            <person name="West A.P."/>
            <person name="Willey D.L."/>
            <person name="Whitehead S.L."/>
            <person name="Wilming L."/>
            <person name="Wray P.W."/>
            <person name="Young L."/>
            <person name="Chen Y."/>
            <person name="Lovering R.C."/>
            <person name="Moschonas N.K."/>
            <person name="Siebert R."/>
            <person name="Fechtel K."/>
            <person name="Bentley D."/>
            <person name="Durbin R.M."/>
            <person name="Hubbard T."/>
            <person name="Doucette-Stamm L."/>
            <person name="Beck S."/>
            <person name="Smith D.R."/>
            <person name="Rogers J."/>
        </authorList>
    </citation>
    <scope>NUCLEOTIDE SEQUENCE [LARGE SCALE GENOMIC DNA]</scope>
</reference>
<organism>
    <name type="scientific">Homo sapiens</name>
    <name type="common">Human</name>
    <dbReference type="NCBI Taxonomy" id="9606"/>
    <lineage>
        <taxon>Eukaryota</taxon>
        <taxon>Metazoa</taxon>
        <taxon>Chordata</taxon>
        <taxon>Craniata</taxon>
        <taxon>Vertebrata</taxon>
        <taxon>Euteleostomi</taxon>
        <taxon>Mammalia</taxon>
        <taxon>Eutheria</taxon>
        <taxon>Euarchontoglires</taxon>
        <taxon>Primates</taxon>
        <taxon>Haplorrhini</taxon>
        <taxon>Catarrhini</taxon>
        <taxon>Hominidae</taxon>
        <taxon>Homo</taxon>
    </lineage>
</organism>
<proteinExistence type="evidence at protein level"/>
<accession>A6NFZ4</accession>